<sequence>MKIRCDVCDKEEASVFCTADEASLCGGCDHQVHHANKLASKHLRFSLLYPSSSNTSSPLCDICQDKKALLFCQQDRAILCKDCDSSIHAANEHTKKHDRFLLTGVKLSATSSVYKPTSKSSSSSSSNQDFSVPGSSISNPPPLKKPLSAPPQSNKIQPFSKINGGDASVNQWGSTSTISEYLMDTLPGWHVEDFLDSSLPTYGFSKSGDDDGVLPYMEPEDDNNTKRNNNNNNNNNNNTVSLPSKNLGIWVPQIPQTLPSSYPNQYFSQDNNIQFGMYNKETSPEVVSFAPIQNMKQQGQNNKRWYDDGGFTVPQITPPPLSSNKKFRSFW</sequence>
<reference key="1">
    <citation type="journal article" date="2000" name="Nature">
        <title>Sequence and analysis of chromosome 1 of the plant Arabidopsis thaliana.</title>
        <authorList>
            <person name="Theologis A."/>
            <person name="Ecker J.R."/>
            <person name="Palm C.J."/>
            <person name="Federspiel N.A."/>
            <person name="Kaul S."/>
            <person name="White O."/>
            <person name="Alonso J."/>
            <person name="Altafi H."/>
            <person name="Araujo R."/>
            <person name="Bowman C.L."/>
            <person name="Brooks S.Y."/>
            <person name="Buehler E."/>
            <person name="Chan A."/>
            <person name="Chao Q."/>
            <person name="Chen H."/>
            <person name="Cheuk R.F."/>
            <person name="Chin C.W."/>
            <person name="Chung M.K."/>
            <person name="Conn L."/>
            <person name="Conway A.B."/>
            <person name="Conway A.R."/>
            <person name="Creasy T.H."/>
            <person name="Dewar K."/>
            <person name="Dunn P."/>
            <person name="Etgu P."/>
            <person name="Feldblyum T.V."/>
            <person name="Feng J.-D."/>
            <person name="Fong B."/>
            <person name="Fujii C.Y."/>
            <person name="Gill J.E."/>
            <person name="Goldsmith A.D."/>
            <person name="Haas B."/>
            <person name="Hansen N.F."/>
            <person name="Hughes B."/>
            <person name="Huizar L."/>
            <person name="Hunter J.L."/>
            <person name="Jenkins J."/>
            <person name="Johnson-Hopson C."/>
            <person name="Khan S."/>
            <person name="Khaykin E."/>
            <person name="Kim C.J."/>
            <person name="Koo H.L."/>
            <person name="Kremenetskaia I."/>
            <person name="Kurtz D.B."/>
            <person name="Kwan A."/>
            <person name="Lam B."/>
            <person name="Langin-Hooper S."/>
            <person name="Lee A."/>
            <person name="Lee J.M."/>
            <person name="Lenz C.A."/>
            <person name="Li J.H."/>
            <person name="Li Y.-P."/>
            <person name="Lin X."/>
            <person name="Liu S.X."/>
            <person name="Liu Z.A."/>
            <person name="Luros J.S."/>
            <person name="Maiti R."/>
            <person name="Marziali A."/>
            <person name="Militscher J."/>
            <person name="Miranda M."/>
            <person name="Nguyen M."/>
            <person name="Nierman W.C."/>
            <person name="Osborne B.I."/>
            <person name="Pai G."/>
            <person name="Peterson J."/>
            <person name="Pham P.K."/>
            <person name="Rizzo M."/>
            <person name="Rooney T."/>
            <person name="Rowley D."/>
            <person name="Sakano H."/>
            <person name="Salzberg S.L."/>
            <person name="Schwartz J.R."/>
            <person name="Shinn P."/>
            <person name="Southwick A.M."/>
            <person name="Sun H."/>
            <person name="Tallon L.J."/>
            <person name="Tambunga G."/>
            <person name="Toriumi M.J."/>
            <person name="Town C.D."/>
            <person name="Utterback T."/>
            <person name="Van Aken S."/>
            <person name="Vaysberg M."/>
            <person name="Vysotskaia V.S."/>
            <person name="Walker M."/>
            <person name="Wu D."/>
            <person name="Yu G."/>
            <person name="Fraser C.M."/>
            <person name="Venter J.C."/>
            <person name="Davis R.W."/>
        </authorList>
    </citation>
    <scope>NUCLEOTIDE SEQUENCE [LARGE SCALE GENOMIC DNA]</scope>
    <source>
        <strain>cv. Columbia</strain>
    </source>
</reference>
<reference key="2">
    <citation type="journal article" date="2017" name="Plant J.">
        <title>Araport11: a complete reannotation of the Arabidopsis thaliana reference genome.</title>
        <authorList>
            <person name="Cheng C.Y."/>
            <person name="Krishnakumar V."/>
            <person name="Chan A.P."/>
            <person name="Thibaud-Nissen F."/>
            <person name="Schobel S."/>
            <person name="Town C.D."/>
        </authorList>
    </citation>
    <scope>GENOME REANNOTATION</scope>
    <source>
        <strain>cv. Columbia</strain>
    </source>
</reference>
<reference key="3">
    <citation type="submission" date="2009-03" db="EMBL/GenBank/DDBJ databases">
        <title>ORF cloning and analysis of Arabidopsis transcription factor genes.</title>
        <authorList>
            <person name="Fujita M."/>
            <person name="Mizukado S."/>
            <person name="Seki M."/>
            <person name="Shinozaki K."/>
            <person name="Mitsuda N."/>
            <person name="Takiguchi Y."/>
            <person name="Takagi M."/>
        </authorList>
    </citation>
    <scope>NUCLEOTIDE SEQUENCE [LARGE SCALE MRNA]</scope>
</reference>
<reference key="4">
    <citation type="journal article" date="2007" name="Plant Cell">
        <title>SALT TOLERANCE HOMOLOG2, a B-box protein in Arabidopsis that activates transcription and positively regulates light-mediated development.</title>
        <authorList>
            <person name="Datta S."/>
            <person name="Hettiarachchi C."/>
            <person name="Johansson H."/>
            <person name="Holm M."/>
        </authorList>
    </citation>
    <scope>FUNCTION</scope>
    <scope>INTERACTION WITH COP1 AND HY5</scope>
    <scope>SUBCELLULAR LOCATION</scope>
    <scope>DISRUPTION PHENOTYPE</scope>
    <scope>MUTAGENESIS OF ASP-20; ASP-75 AND ASP-84</scope>
</reference>
<reference key="5">
    <citation type="journal article" date="2009" name="Plant Cell">
        <title>The Arabidopsis B-box zinc finger family.</title>
        <authorList>
            <person name="Khanna R."/>
            <person name="Kronmiller B."/>
            <person name="Maszle D.R."/>
            <person name="Coupland G."/>
            <person name="Holm M."/>
            <person name="Mizuno T."/>
            <person name="Wu S.H."/>
        </authorList>
    </citation>
    <scope>GENE FAMILY</scope>
    <scope>NOMENCLATURE</scope>
</reference>
<reference key="6">
    <citation type="journal article" date="2010" name="Plant J.">
        <title>AtBBX21 and COP1 genetically interact in the regulation of shade avoidance.</title>
        <authorList>
            <person name="Crocco C.D."/>
            <person name="Holm M."/>
            <person name="Yanovsky M.J."/>
            <person name="Botto J.F."/>
        </authorList>
    </citation>
    <scope>FUNCTION</scope>
</reference>
<reference key="7">
    <citation type="journal article" date="2011" name="Plant Physiol.">
        <title>BBX32, an Arabidopsis B-Box protein, functions in light signaling by suppressing HY5-regulated gene expression and interacting with STH2/BBX21.</title>
        <authorList>
            <person name="Holtan H.E."/>
            <person name="Bandong S."/>
            <person name="Marion C.M."/>
            <person name="Adam L."/>
            <person name="Tiwari S."/>
            <person name="Shen Y."/>
            <person name="Maloof J.N."/>
            <person name="Maszle D.R."/>
            <person name="Ohto M.A."/>
            <person name="Preuss S."/>
            <person name="Meister R."/>
            <person name="Petracek M."/>
            <person name="Repetti P.P."/>
            <person name="Reuber T.L."/>
            <person name="Ratcliffe O.J."/>
            <person name="Khanna R."/>
        </authorList>
    </citation>
    <scope>FUNCTION</scope>
    <scope>INTERACTION WITH BBX32 AND HY5</scope>
</reference>
<reference key="8">
    <citation type="journal article" date="2014" name="PLoS ONE">
        <title>DUF581 is plant specific FCS-like zinc finger involved in protein-protein interaction.</title>
        <authorList>
            <person name="Jamsheer K M."/>
            <person name="Laxmi A."/>
        </authorList>
    </citation>
    <scope>INTERACTION WITH FLZ1</scope>
</reference>
<name>BBX21_ARATH</name>
<proteinExistence type="evidence at protein level"/>
<organism>
    <name type="scientific">Arabidopsis thaliana</name>
    <name type="common">Mouse-ear cress</name>
    <dbReference type="NCBI Taxonomy" id="3702"/>
    <lineage>
        <taxon>Eukaryota</taxon>
        <taxon>Viridiplantae</taxon>
        <taxon>Streptophyta</taxon>
        <taxon>Embryophyta</taxon>
        <taxon>Tracheophyta</taxon>
        <taxon>Spermatophyta</taxon>
        <taxon>Magnoliopsida</taxon>
        <taxon>eudicotyledons</taxon>
        <taxon>Gunneridae</taxon>
        <taxon>Pentapetalae</taxon>
        <taxon>rosids</taxon>
        <taxon>malvids</taxon>
        <taxon>Brassicales</taxon>
        <taxon>Brassicaceae</taxon>
        <taxon>Camelineae</taxon>
        <taxon>Arabidopsis</taxon>
    </lineage>
</organism>
<protein>
    <recommendedName>
        <fullName evidence="7">B-box zinc finger protein 21</fullName>
        <shortName>AtBBX21</shortName>
    </recommendedName>
    <alternativeName>
        <fullName evidence="8">Protein LONG HYPOCOTYL UNDER SHADE</fullName>
    </alternativeName>
    <alternativeName>
        <fullName>Protein SALT TOLERANCE HOMOLOG 2</fullName>
    </alternativeName>
</protein>
<gene>
    <name evidence="7" type="primary">BBX21</name>
    <name evidence="8" type="synonym">LHUS</name>
    <name type="synonym">STH2</name>
    <name type="ordered locus">At1g75540</name>
    <name type="ORF">F10A5.24</name>
</gene>
<accession>Q9LQZ7</accession>
<accession>C0SV33</accession>
<comment type="function">
    <text evidence="3 4">Transcription activator that acts as a positive regulator of seedling photomorphogenesis (PubMed:17965270). Acts downstream of COP1 and play an important role in early and long-term adjustment of the shade avoidance syndrome (SAS) responses in natural environments (PubMed:21070414).</text>
</comment>
<comment type="subunit">
    <text evidence="3 5 6">Interacts with COP1, HY5 and BBX32. Interacts with FLZ1 (PubMed:24901469).</text>
</comment>
<comment type="interaction">
    <interactant intactId="EBI-1994459">
        <id>Q9LQZ7</id>
    </interactant>
    <interactant intactId="EBI-301660">
        <id>O24646</id>
        <label>HY5</label>
    </interactant>
    <organismsDiffer>false</organismsDiffer>
    <experiments>4</experiments>
</comment>
<comment type="subcellular location">
    <subcellularLocation>
        <location evidence="3">Nucleus</location>
    </subcellularLocation>
</comment>
<comment type="disruption phenotype">
    <text evidence="3">Enhanced number of emerged lateral roots.</text>
</comment>
<feature type="chain" id="PRO_0000113297" description="B-box zinc finger protein 21">
    <location>
        <begin position="1"/>
        <end position="331"/>
    </location>
</feature>
<feature type="zinc finger region" description="B box-type 1; atypical" evidence="1">
    <location>
        <begin position="5"/>
        <end position="47"/>
    </location>
</feature>
<feature type="zinc finger region" description="B box-type 2; atypical" evidence="1">
    <location>
        <begin position="60"/>
        <end position="102"/>
    </location>
</feature>
<feature type="region of interest" description="Disordered" evidence="2">
    <location>
        <begin position="115"/>
        <end position="167"/>
    </location>
</feature>
<feature type="region of interest" description="Disordered" evidence="2">
    <location>
        <begin position="209"/>
        <end position="241"/>
    </location>
</feature>
<feature type="compositionally biased region" description="Low complexity" evidence="2">
    <location>
        <begin position="115"/>
        <end position="126"/>
    </location>
</feature>
<feature type="compositionally biased region" description="Low complexity" evidence="2">
    <location>
        <begin position="228"/>
        <end position="238"/>
    </location>
</feature>
<feature type="binding site" evidence="1">
    <location>
        <position position="5"/>
    </location>
    <ligand>
        <name>Zn(2+)</name>
        <dbReference type="ChEBI" id="CHEBI:29105"/>
        <label>1</label>
    </ligand>
</feature>
<feature type="binding site" evidence="1">
    <location>
        <position position="8"/>
    </location>
    <ligand>
        <name>Zn(2+)</name>
        <dbReference type="ChEBI" id="CHEBI:29105"/>
        <label>1</label>
    </ligand>
</feature>
<feature type="binding site" evidence="1">
    <location>
        <position position="28"/>
    </location>
    <ligand>
        <name>Zn(2+)</name>
        <dbReference type="ChEBI" id="CHEBI:29105"/>
        <label>1</label>
    </ligand>
</feature>
<feature type="binding site" evidence="1">
    <location>
        <position position="34"/>
    </location>
    <ligand>
        <name>Zn(2+)</name>
        <dbReference type="ChEBI" id="CHEBI:29105"/>
        <label>1</label>
    </ligand>
</feature>
<feature type="binding site" evidence="1">
    <location>
        <position position="60"/>
    </location>
    <ligand>
        <name>Zn(2+)</name>
        <dbReference type="ChEBI" id="CHEBI:29105"/>
        <label>2</label>
    </ligand>
</feature>
<feature type="binding site" evidence="1">
    <location>
        <position position="63"/>
    </location>
    <ligand>
        <name>Zn(2+)</name>
        <dbReference type="ChEBI" id="CHEBI:29105"/>
        <label>2</label>
    </ligand>
</feature>
<feature type="binding site" evidence="1">
    <location>
        <position position="83"/>
    </location>
    <ligand>
        <name>Zn(2+)</name>
        <dbReference type="ChEBI" id="CHEBI:29105"/>
        <label>2</label>
    </ligand>
</feature>
<feature type="binding site" evidence="1">
    <location>
        <position position="93"/>
    </location>
    <ligand>
        <name>Zn(2+)</name>
        <dbReference type="ChEBI" id="CHEBI:29105"/>
        <label>2</label>
    </ligand>
</feature>
<feature type="mutagenesis site" description="Abolishes interaction with HY5." evidence="3">
    <original>D</original>
    <variation>A</variation>
    <location>
        <position position="20"/>
    </location>
</feature>
<feature type="mutagenesis site" description="Abolishes interaction with HY5." evidence="3">
    <original>D</original>
    <variation>A</variation>
    <location>
        <position position="75"/>
    </location>
</feature>
<feature type="mutagenesis site" description="Abolishes interaction with HY5." evidence="3">
    <original>D</original>
    <variation>A</variation>
    <location>
        <position position="84"/>
    </location>
</feature>
<evidence type="ECO:0000255" key="1">
    <source>
        <dbReference type="PROSITE-ProRule" id="PRU00024"/>
    </source>
</evidence>
<evidence type="ECO:0000256" key="2">
    <source>
        <dbReference type="SAM" id="MobiDB-lite"/>
    </source>
</evidence>
<evidence type="ECO:0000269" key="3">
    <source>
    </source>
</evidence>
<evidence type="ECO:0000269" key="4">
    <source>
    </source>
</evidence>
<evidence type="ECO:0000269" key="5">
    <source>
    </source>
</evidence>
<evidence type="ECO:0000269" key="6">
    <source>
    </source>
</evidence>
<evidence type="ECO:0000303" key="7">
    <source>
    </source>
</evidence>
<evidence type="ECO:0000303" key="8">
    <source>
    </source>
</evidence>
<dbReference type="EMBL" id="AC006434">
    <property type="protein sequence ID" value="AAF87126.1"/>
    <property type="molecule type" value="Genomic_DNA"/>
</dbReference>
<dbReference type="EMBL" id="CP002684">
    <property type="protein sequence ID" value="AEE35731.1"/>
    <property type="molecule type" value="Genomic_DNA"/>
</dbReference>
<dbReference type="EMBL" id="AB493536">
    <property type="protein sequence ID" value="BAH30374.1"/>
    <property type="molecule type" value="mRNA"/>
</dbReference>
<dbReference type="PIR" id="G96785">
    <property type="entry name" value="G96785"/>
</dbReference>
<dbReference type="RefSeq" id="NP_177686.1">
    <property type="nucleotide sequence ID" value="NM_106207.4"/>
</dbReference>
<dbReference type="SMR" id="Q9LQZ7"/>
<dbReference type="BioGRID" id="29109">
    <property type="interactions" value="8"/>
</dbReference>
<dbReference type="FunCoup" id="Q9LQZ7">
    <property type="interactions" value="307"/>
</dbReference>
<dbReference type="IntAct" id="Q9LQZ7">
    <property type="interactions" value="6"/>
</dbReference>
<dbReference type="STRING" id="3702.Q9LQZ7"/>
<dbReference type="iPTMnet" id="Q9LQZ7"/>
<dbReference type="PaxDb" id="3702-AT1G75540.1"/>
<dbReference type="ProteomicsDB" id="241208"/>
<dbReference type="EnsemblPlants" id="AT1G75540.1">
    <property type="protein sequence ID" value="AT1G75540.1"/>
    <property type="gene ID" value="AT1G75540"/>
</dbReference>
<dbReference type="GeneID" id="843890"/>
<dbReference type="Gramene" id="AT1G75540.1">
    <property type="protein sequence ID" value="AT1G75540.1"/>
    <property type="gene ID" value="AT1G75540"/>
</dbReference>
<dbReference type="KEGG" id="ath:AT1G75540"/>
<dbReference type="Araport" id="AT1G75540"/>
<dbReference type="TAIR" id="AT1G75540">
    <property type="gene designation" value="BBX21"/>
</dbReference>
<dbReference type="eggNOG" id="ENOG502QUWE">
    <property type="taxonomic scope" value="Eukaryota"/>
</dbReference>
<dbReference type="HOGENOM" id="CLU_025298_4_0_1"/>
<dbReference type="InParanoid" id="Q9LQZ7"/>
<dbReference type="OMA" id="RNNYNTA"/>
<dbReference type="PhylomeDB" id="Q9LQZ7"/>
<dbReference type="PRO" id="PR:Q9LQZ7"/>
<dbReference type="Proteomes" id="UP000006548">
    <property type="component" value="Chromosome 1"/>
</dbReference>
<dbReference type="ExpressionAtlas" id="Q9LQZ7">
    <property type="expression patterns" value="baseline and differential"/>
</dbReference>
<dbReference type="GO" id="GO:0005634">
    <property type="term" value="C:nucleus"/>
    <property type="evidence" value="ECO:0007669"/>
    <property type="project" value="UniProtKB-SubCell"/>
</dbReference>
<dbReference type="GO" id="GO:0003700">
    <property type="term" value="F:DNA-binding transcription factor activity"/>
    <property type="evidence" value="ECO:0000250"/>
    <property type="project" value="TAIR"/>
</dbReference>
<dbReference type="GO" id="GO:0000976">
    <property type="term" value="F:transcription cis-regulatory region binding"/>
    <property type="evidence" value="ECO:0000353"/>
    <property type="project" value="TAIR"/>
</dbReference>
<dbReference type="GO" id="GO:0008270">
    <property type="term" value="F:zinc ion binding"/>
    <property type="evidence" value="ECO:0007669"/>
    <property type="project" value="UniProtKB-KW"/>
</dbReference>
<dbReference type="GO" id="GO:0010117">
    <property type="term" value="P:photoprotection"/>
    <property type="evidence" value="ECO:0000315"/>
    <property type="project" value="TAIR"/>
</dbReference>
<dbReference type="GO" id="GO:1905157">
    <property type="term" value="P:positive regulation of photosynthesis"/>
    <property type="evidence" value="ECO:0000315"/>
    <property type="project" value="TAIR"/>
</dbReference>
<dbReference type="GO" id="GO:0006355">
    <property type="term" value="P:regulation of DNA-templated transcription"/>
    <property type="evidence" value="ECO:0000315"/>
    <property type="project" value="TAIR"/>
</dbReference>
<dbReference type="GO" id="GO:0009641">
    <property type="term" value="P:shade avoidance"/>
    <property type="evidence" value="ECO:0000315"/>
    <property type="project" value="TAIR"/>
</dbReference>
<dbReference type="CDD" id="cd19821">
    <property type="entry name" value="Bbox1_BBX-like"/>
    <property type="match status" value="2"/>
</dbReference>
<dbReference type="FunFam" id="3.30.160.60:FF:000856">
    <property type="entry name" value="B-box zinc finger protein 21"/>
    <property type="match status" value="1"/>
</dbReference>
<dbReference type="Gene3D" id="3.30.160.60">
    <property type="entry name" value="Classic Zinc Finger"/>
    <property type="match status" value="1"/>
</dbReference>
<dbReference type="InterPro" id="IPR051979">
    <property type="entry name" value="B-box_zinc_finger"/>
</dbReference>
<dbReference type="InterPro" id="IPR049808">
    <property type="entry name" value="CONSTANS-like_Bbox1"/>
</dbReference>
<dbReference type="InterPro" id="IPR000315">
    <property type="entry name" value="Znf_B-box"/>
</dbReference>
<dbReference type="PANTHER" id="PTHR31832:SF52">
    <property type="entry name" value="B-BOX ZINC FINGER PROTEIN 21"/>
    <property type="match status" value="1"/>
</dbReference>
<dbReference type="PANTHER" id="PTHR31832">
    <property type="entry name" value="B-BOX ZINC FINGER PROTEIN 22"/>
    <property type="match status" value="1"/>
</dbReference>
<dbReference type="Pfam" id="PF00643">
    <property type="entry name" value="zf-B_box"/>
    <property type="match status" value="2"/>
</dbReference>
<dbReference type="SMART" id="SM00336">
    <property type="entry name" value="BBOX"/>
    <property type="match status" value="2"/>
</dbReference>
<dbReference type="SUPFAM" id="SSF57845">
    <property type="entry name" value="B-box zinc-binding domain"/>
    <property type="match status" value="1"/>
</dbReference>
<dbReference type="PROSITE" id="PS50119">
    <property type="entry name" value="ZF_BBOX"/>
    <property type="match status" value="2"/>
</dbReference>
<keyword id="KW-0010">Activator</keyword>
<keyword id="KW-0479">Metal-binding</keyword>
<keyword id="KW-0539">Nucleus</keyword>
<keyword id="KW-1185">Reference proteome</keyword>
<keyword id="KW-0677">Repeat</keyword>
<keyword id="KW-0804">Transcription</keyword>
<keyword id="KW-0805">Transcription regulation</keyword>
<keyword id="KW-0862">Zinc</keyword>
<keyword id="KW-0863">Zinc-finger</keyword>